<proteinExistence type="predicted"/>
<sequence>MPDADICFMDIKEILAENVRSYRNINNLSQEQLAEISGLHRTYIGSVERKERNVTLSTLIILAKALNTSVPKLLTRQGLKNEQG</sequence>
<accession>P14307</accession>
<comment type="function">
    <text evidence="2 3">May control expression of its associated restriction-modification system SmaI.</text>
</comment>
<feature type="chain" id="PRO_0000149784" description="Control protein C.SmaI">
    <location>
        <begin position="1"/>
        <end position="84"/>
    </location>
</feature>
<feature type="domain" description="HTH cro/C1-type" evidence="1">
    <location>
        <begin position="19"/>
        <end position="73"/>
    </location>
</feature>
<feature type="DNA-binding region" description="H-T-H motif" evidence="1">
    <location>
        <begin position="30"/>
        <end position="49"/>
    </location>
</feature>
<name>YSMA_SERMA</name>
<keyword id="KW-0238">DNA-binding</keyword>
<keyword id="KW-0804">Transcription</keyword>
<keyword id="KW-0805">Transcription regulation</keyword>
<evidence type="ECO:0000255" key="1">
    <source>
        <dbReference type="PROSITE-ProRule" id="PRU00257"/>
    </source>
</evidence>
<evidence type="ECO:0000303" key="2">
    <source>
    </source>
</evidence>
<evidence type="ECO:0000305" key="3">
    <source>
    </source>
</evidence>
<protein>
    <recommendedName>
        <fullName evidence="2">Control protein C.SmaI</fullName>
    </recommendedName>
</protein>
<reference key="1">
    <citation type="journal article" date="1989" name="Nucleic Acids Res.">
        <title>Cloning, characterization and heterologous expression of the SmaI restriction-modification system.</title>
        <authorList>
            <person name="Heidmann S."/>
            <person name="Seifert W."/>
            <person name="Kessler C."/>
            <person name="Domdey H."/>
        </authorList>
    </citation>
    <scope>NUCLEOTIDE SEQUENCE [GENOMIC DNA]</scope>
    <source>
        <strain>BMTU 1373</strain>
    </source>
</reference>
<reference key="2">
    <citation type="journal article" date="2003" name="Nucleic Acids Res.">
        <title>A nomenclature for restriction enzymes, DNA methyltransferases, homing endonucleases and their genes.</title>
        <authorList>
            <person name="Roberts R.J."/>
            <person name="Belfort M."/>
            <person name="Bestor T."/>
            <person name="Bhagwat A.S."/>
            <person name="Bickle T.A."/>
            <person name="Bitinaite J."/>
            <person name="Blumenthal R.M."/>
            <person name="Degtyarev S.K."/>
            <person name="Dryden D.T."/>
            <person name="Dybvig K."/>
            <person name="Firman K."/>
            <person name="Gromova E.S."/>
            <person name="Gumport R.I."/>
            <person name="Halford S.E."/>
            <person name="Hattman S."/>
            <person name="Heitman J."/>
            <person name="Hornby D.P."/>
            <person name="Janulaitis A."/>
            <person name="Jeltsch A."/>
            <person name="Josephsen J."/>
            <person name="Kiss A."/>
            <person name="Klaenhammer T.R."/>
            <person name="Kobayashi I."/>
            <person name="Kong H."/>
            <person name="Krueger D.H."/>
            <person name="Lacks S."/>
            <person name="Marinus M.G."/>
            <person name="Miyahara M."/>
            <person name="Morgan R.D."/>
            <person name="Murray N.E."/>
            <person name="Nagaraja V."/>
            <person name="Piekarowicz A."/>
            <person name="Pingoud A."/>
            <person name="Raleigh E."/>
            <person name="Rao D.N."/>
            <person name="Reich N."/>
            <person name="Repin V.E."/>
            <person name="Selker E.U."/>
            <person name="Shaw P.C."/>
            <person name="Stein D.C."/>
            <person name="Stoddard B.L."/>
            <person name="Szybalski W."/>
            <person name="Trautner T.A."/>
            <person name="Van Etten J.L."/>
            <person name="Vitor J.M."/>
            <person name="Wilson G.G."/>
            <person name="Xu S.Y."/>
        </authorList>
    </citation>
    <scope>NOMENCLATURE</scope>
</reference>
<organism>
    <name type="scientific">Serratia marcescens</name>
    <dbReference type="NCBI Taxonomy" id="615"/>
    <lineage>
        <taxon>Bacteria</taxon>
        <taxon>Pseudomonadati</taxon>
        <taxon>Pseudomonadota</taxon>
        <taxon>Gammaproteobacteria</taxon>
        <taxon>Enterobacterales</taxon>
        <taxon>Yersiniaceae</taxon>
        <taxon>Serratia</taxon>
    </lineage>
</organism>
<dbReference type="EMBL" id="X16458">
    <property type="protein sequence ID" value="CAA34477.1"/>
    <property type="molecule type" value="Genomic_DNA"/>
</dbReference>
<dbReference type="PIR" id="S06037">
    <property type="entry name" value="S06037"/>
</dbReference>
<dbReference type="SMR" id="P14307"/>
<dbReference type="REBASE" id="3683">
    <property type="entry name" value="C.SmaI"/>
</dbReference>
<dbReference type="GO" id="GO:0005829">
    <property type="term" value="C:cytosol"/>
    <property type="evidence" value="ECO:0007669"/>
    <property type="project" value="TreeGrafter"/>
</dbReference>
<dbReference type="GO" id="GO:0003677">
    <property type="term" value="F:DNA binding"/>
    <property type="evidence" value="ECO:0007669"/>
    <property type="project" value="UniProtKB-KW"/>
</dbReference>
<dbReference type="GO" id="GO:0003700">
    <property type="term" value="F:DNA-binding transcription factor activity"/>
    <property type="evidence" value="ECO:0007669"/>
    <property type="project" value="TreeGrafter"/>
</dbReference>
<dbReference type="CDD" id="cd00093">
    <property type="entry name" value="HTH_XRE"/>
    <property type="match status" value="1"/>
</dbReference>
<dbReference type="Gene3D" id="1.10.260.40">
    <property type="entry name" value="lambda repressor-like DNA-binding domains"/>
    <property type="match status" value="1"/>
</dbReference>
<dbReference type="InterPro" id="IPR050807">
    <property type="entry name" value="Bact_TransReg_Diox"/>
</dbReference>
<dbReference type="InterPro" id="IPR001387">
    <property type="entry name" value="Cro/C1-type_HTH"/>
</dbReference>
<dbReference type="InterPro" id="IPR010982">
    <property type="entry name" value="Lambda_DNA-bd_dom_sf"/>
</dbReference>
<dbReference type="PANTHER" id="PTHR46797">
    <property type="entry name" value="HTH-TYPE TRANSCRIPTIONAL REGULATOR"/>
    <property type="match status" value="1"/>
</dbReference>
<dbReference type="PANTHER" id="PTHR46797:SF23">
    <property type="entry name" value="HTH-TYPE TRANSCRIPTIONAL REGULATOR SUTR"/>
    <property type="match status" value="1"/>
</dbReference>
<dbReference type="Pfam" id="PF01381">
    <property type="entry name" value="HTH_3"/>
    <property type="match status" value="1"/>
</dbReference>
<dbReference type="SMART" id="SM00530">
    <property type="entry name" value="HTH_XRE"/>
    <property type="match status" value="1"/>
</dbReference>
<dbReference type="SUPFAM" id="SSF47413">
    <property type="entry name" value="lambda repressor-like DNA-binding domains"/>
    <property type="match status" value="1"/>
</dbReference>
<dbReference type="PROSITE" id="PS50943">
    <property type="entry name" value="HTH_CROC1"/>
    <property type="match status" value="1"/>
</dbReference>